<sequence length="377" mass="41311">MSAPHDPPRPEPRPDLRSLPLDRLERLVAALGERPFRARQLHRWLQQKGAASLDELTDVPRALRAALAEATTLTTLERATEQRSVDGTIKWTWRTHDGKLVESVYMPEPDRRTLCVSSQVGCAVGCTFCLTGTMGLARNLTPGEIVEQVHRANRRIVELGEGQGPRPLTNLVFMGMGEPLANYRSLKVALDLLLSEDGPNFSHRHVTVSTSGLVPMIRKLGEETPVKLAISLNATTDAQRDALMPINRRYPLAQLLEACRSFPIRNGRRITFEYVLLGGVNDSLEDAVRLARLVRGIPTKVNLIPYNANPGLPYRAPAPERVVEFQETLAARNLTAVVRKNRGGDISAACGQLAAEGGPGDPRRPAPPPLTRLPAAG</sequence>
<proteinExistence type="inferred from homology"/>
<protein>
    <recommendedName>
        <fullName evidence="1">Dual-specificity RNA methyltransferase RlmN</fullName>
        <ecNumber evidence="1">2.1.1.192</ecNumber>
    </recommendedName>
    <alternativeName>
        <fullName evidence="1">23S rRNA (adenine(2503)-C(2))-methyltransferase</fullName>
    </alternativeName>
    <alternativeName>
        <fullName evidence="1">23S rRNA m2A2503 methyltransferase</fullName>
    </alternativeName>
    <alternativeName>
        <fullName evidence="1">Ribosomal RNA large subunit methyltransferase N</fullName>
    </alternativeName>
    <alternativeName>
        <fullName evidence="1">tRNA (adenine(37)-C(2))-methyltransferase</fullName>
    </alternativeName>
    <alternativeName>
        <fullName evidence="1">tRNA m2A37 methyltransferase</fullName>
    </alternativeName>
</protein>
<evidence type="ECO:0000255" key="1">
    <source>
        <dbReference type="HAMAP-Rule" id="MF_01849"/>
    </source>
</evidence>
<evidence type="ECO:0000255" key="2">
    <source>
        <dbReference type="PROSITE-ProRule" id="PRU01266"/>
    </source>
</evidence>
<evidence type="ECO:0000256" key="3">
    <source>
        <dbReference type="SAM" id="MobiDB-lite"/>
    </source>
</evidence>
<keyword id="KW-0004">4Fe-4S</keyword>
<keyword id="KW-0963">Cytoplasm</keyword>
<keyword id="KW-1015">Disulfide bond</keyword>
<keyword id="KW-0408">Iron</keyword>
<keyword id="KW-0411">Iron-sulfur</keyword>
<keyword id="KW-0479">Metal-binding</keyword>
<keyword id="KW-0489">Methyltransferase</keyword>
<keyword id="KW-1185">Reference proteome</keyword>
<keyword id="KW-0698">rRNA processing</keyword>
<keyword id="KW-0949">S-adenosyl-L-methionine</keyword>
<keyword id="KW-0808">Transferase</keyword>
<keyword id="KW-0819">tRNA processing</keyword>
<reference key="1">
    <citation type="journal article" date="2015" name="Genome Announc.">
        <title>Complete genome sequence of Anaeromyxobacter sp. Fw109-5, an anaerobic, metal-reducing bacterium isolated from a contaminated subsurface environment.</title>
        <authorList>
            <person name="Hwang C."/>
            <person name="Copeland A."/>
            <person name="Lucas S."/>
            <person name="Lapidus A."/>
            <person name="Barry K."/>
            <person name="Glavina Del Rio T."/>
            <person name="Dalin E."/>
            <person name="Tice H."/>
            <person name="Pitluck S."/>
            <person name="Sims D."/>
            <person name="Brettin T."/>
            <person name="Bruce D.C."/>
            <person name="Detter J.C."/>
            <person name="Han C.S."/>
            <person name="Schmutz J."/>
            <person name="Larimer F.W."/>
            <person name="Land M.L."/>
            <person name="Hauser L.J."/>
            <person name="Kyrpides N."/>
            <person name="Lykidis A."/>
            <person name="Richardson P."/>
            <person name="Belieav A."/>
            <person name="Sanford R.A."/>
            <person name="Loeffler F.E."/>
            <person name="Fields M.W."/>
        </authorList>
    </citation>
    <scope>NUCLEOTIDE SEQUENCE [LARGE SCALE GENOMIC DNA]</scope>
    <source>
        <strain>Fw109-5</strain>
    </source>
</reference>
<comment type="function">
    <text evidence="1">Specifically methylates position 2 of adenine 2503 in 23S rRNA and position 2 of adenine 37 in tRNAs. m2A2503 modification seems to play a crucial role in the proofreading step occurring at the peptidyl transferase center and thus would serve to optimize ribosomal fidelity.</text>
</comment>
<comment type="catalytic activity">
    <reaction evidence="1">
        <text>adenosine(2503) in 23S rRNA + 2 reduced [2Fe-2S]-[ferredoxin] + 2 S-adenosyl-L-methionine = 2-methyladenosine(2503) in 23S rRNA + 5'-deoxyadenosine + L-methionine + 2 oxidized [2Fe-2S]-[ferredoxin] + S-adenosyl-L-homocysteine</text>
        <dbReference type="Rhea" id="RHEA:42916"/>
        <dbReference type="Rhea" id="RHEA-COMP:10000"/>
        <dbReference type="Rhea" id="RHEA-COMP:10001"/>
        <dbReference type="Rhea" id="RHEA-COMP:10152"/>
        <dbReference type="Rhea" id="RHEA-COMP:10282"/>
        <dbReference type="ChEBI" id="CHEBI:17319"/>
        <dbReference type="ChEBI" id="CHEBI:33737"/>
        <dbReference type="ChEBI" id="CHEBI:33738"/>
        <dbReference type="ChEBI" id="CHEBI:57844"/>
        <dbReference type="ChEBI" id="CHEBI:57856"/>
        <dbReference type="ChEBI" id="CHEBI:59789"/>
        <dbReference type="ChEBI" id="CHEBI:74411"/>
        <dbReference type="ChEBI" id="CHEBI:74497"/>
        <dbReference type="EC" id="2.1.1.192"/>
    </reaction>
</comment>
<comment type="catalytic activity">
    <reaction evidence="1">
        <text>adenosine(37) in tRNA + 2 reduced [2Fe-2S]-[ferredoxin] + 2 S-adenosyl-L-methionine = 2-methyladenosine(37) in tRNA + 5'-deoxyadenosine + L-methionine + 2 oxidized [2Fe-2S]-[ferredoxin] + S-adenosyl-L-homocysteine</text>
        <dbReference type="Rhea" id="RHEA:43332"/>
        <dbReference type="Rhea" id="RHEA-COMP:10000"/>
        <dbReference type="Rhea" id="RHEA-COMP:10001"/>
        <dbReference type="Rhea" id="RHEA-COMP:10162"/>
        <dbReference type="Rhea" id="RHEA-COMP:10485"/>
        <dbReference type="ChEBI" id="CHEBI:17319"/>
        <dbReference type="ChEBI" id="CHEBI:33737"/>
        <dbReference type="ChEBI" id="CHEBI:33738"/>
        <dbReference type="ChEBI" id="CHEBI:57844"/>
        <dbReference type="ChEBI" id="CHEBI:57856"/>
        <dbReference type="ChEBI" id="CHEBI:59789"/>
        <dbReference type="ChEBI" id="CHEBI:74411"/>
        <dbReference type="ChEBI" id="CHEBI:74497"/>
        <dbReference type="EC" id="2.1.1.192"/>
    </reaction>
</comment>
<comment type="cofactor">
    <cofactor evidence="1">
        <name>[4Fe-4S] cluster</name>
        <dbReference type="ChEBI" id="CHEBI:49883"/>
    </cofactor>
    <text evidence="1">Binds 1 [4Fe-4S] cluster. The cluster is coordinated with 3 cysteines and an exchangeable S-adenosyl-L-methionine.</text>
</comment>
<comment type="subcellular location">
    <subcellularLocation>
        <location evidence="1">Cytoplasm</location>
    </subcellularLocation>
</comment>
<comment type="miscellaneous">
    <text evidence="1">Reaction proceeds by a ping-pong mechanism involving intermediate methylation of a conserved cysteine residue.</text>
</comment>
<comment type="similarity">
    <text evidence="1">Belongs to the radical SAM superfamily. RlmN family.</text>
</comment>
<organism>
    <name type="scientific">Anaeromyxobacter sp. (strain Fw109-5)</name>
    <dbReference type="NCBI Taxonomy" id="404589"/>
    <lineage>
        <taxon>Bacteria</taxon>
        <taxon>Pseudomonadati</taxon>
        <taxon>Myxococcota</taxon>
        <taxon>Myxococcia</taxon>
        <taxon>Myxococcales</taxon>
        <taxon>Cystobacterineae</taxon>
        <taxon>Anaeromyxobacteraceae</taxon>
        <taxon>Anaeromyxobacter</taxon>
    </lineage>
</organism>
<accession>A7HCD6</accession>
<feature type="chain" id="PRO_0000350016" description="Dual-specificity RNA methyltransferase RlmN">
    <location>
        <begin position="1"/>
        <end position="377"/>
    </location>
</feature>
<feature type="domain" description="Radical SAM core" evidence="2">
    <location>
        <begin position="108"/>
        <end position="345"/>
    </location>
</feature>
<feature type="region of interest" description="Disordered" evidence="3">
    <location>
        <begin position="354"/>
        <end position="377"/>
    </location>
</feature>
<feature type="active site" description="Proton acceptor" evidence="1">
    <location>
        <position position="102"/>
    </location>
</feature>
<feature type="active site" description="S-methylcysteine intermediate" evidence="1">
    <location>
        <position position="350"/>
    </location>
</feature>
<feature type="binding site" evidence="1">
    <location>
        <position position="122"/>
    </location>
    <ligand>
        <name>[4Fe-4S] cluster</name>
        <dbReference type="ChEBI" id="CHEBI:49883"/>
        <note>4Fe-4S-S-AdoMet</note>
    </ligand>
</feature>
<feature type="binding site" evidence="1">
    <location>
        <position position="126"/>
    </location>
    <ligand>
        <name>[4Fe-4S] cluster</name>
        <dbReference type="ChEBI" id="CHEBI:49883"/>
        <note>4Fe-4S-S-AdoMet</note>
    </ligand>
</feature>
<feature type="binding site" evidence="1">
    <location>
        <position position="129"/>
    </location>
    <ligand>
        <name>[4Fe-4S] cluster</name>
        <dbReference type="ChEBI" id="CHEBI:49883"/>
        <note>4Fe-4S-S-AdoMet</note>
    </ligand>
</feature>
<feature type="binding site" evidence="1">
    <location>
        <begin position="177"/>
        <end position="178"/>
    </location>
    <ligand>
        <name>S-adenosyl-L-methionine</name>
        <dbReference type="ChEBI" id="CHEBI:59789"/>
    </ligand>
</feature>
<feature type="binding site" evidence="1">
    <location>
        <position position="209"/>
    </location>
    <ligand>
        <name>S-adenosyl-L-methionine</name>
        <dbReference type="ChEBI" id="CHEBI:59789"/>
    </ligand>
</feature>
<feature type="binding site" evidence="1">
    <location>
        <begin position="231"/>
        <end position="233"/>
    </location>
    <ligand>
        <name>S-adenosyl-L-methionine</name>
        <dbReference type="ChEBI" id="CHEBI:59789"/>
    </ligand>
</feature>
<feature type="binding site" evidence="1">
    <location>
        <position position="307"/>
    </location>
    <ligand>
        <name>S-adenosyl-L-methionine</name>
        <dbReference type="ChEBI" id="CHEBI:59789"/>
    </ligand>
</feature>
<feature type="disulfide bond" description="(transient)" evidence="1">
    <location>
        <begin position="115"/>
        <end position="350"/>
    </location>
</feature>
<name>RLMN_ANADF</name>
<dbReference type="EC" id="2.1.1.192" evidence="1"/>
<dbReference type="EMBL" id="CP000769">
    <property type="protein sequence ID" value="ABS26382.1"/>
    <property type="molecule type" value="Genomic_DNA"/>
</dbReference>
<dbReference type="RefSeq" id="WP_012096964.1">
    <property type="nucleotide sequence ID" value="NC_009675.1"/>
</dbReference>
<dbReference type="SMR" id="A7HCD6"/>
<dbReference type="STRING" id="404589.Anae109_2180"/>
<dbReference type="KEGG" id="afw:Anae109_2180"/>
<dbReference type="eggNOG" id="COG0820">
    <property type="taxonomic scope" value="Bacteria"/>
</dbReference>
<dbReference type="HOGENOM" id="CLU_029101_2_0_7"/>
<dbReference type="OrthoDB" id="9793973at2"/>
<dbReference type="Proteomes" id="UP000006382">
    <property type="component" value="Chromosome"/>
</dbReference>
<dbReference type="GO" id="GO:0005737">
    <property type="term" value="C:cytoplasm"/>
    <property type="evidence" value="ECO:0007669"/>
    <property type="project" value="UniProtKB-SubCell"/>
</dbReference>
<dbReference type="GO" id="GO:0051539">
    <property type="term" value="F:4 iron, 4 sulfur cluster binding"/>
    <property type="evidence" value="ECO:0007669"/>
    <property type="project" value="UniProtKB-UniRule"/>
</dbReference>
<dbReference type="GO" id="GO:0046872">
    <property type="term" value="F:metal ion binding"/>
    <property type="evidence" value="ECO:0007669"/>
    <property type="project" value="UniProtKB-KW"/>
</dbReference>
<dbReference type="GO" id="GO:0070040">
    <property type="term" value="F:rRNA (adenine(2503)-C2-)-methyltransferase activity"/>
    <property type="evidence" value="ECO:0007669"/>
    <property type="project" value="UniProtKB-UniRule"/>
</dbReference>
<dbReference type="GO" id="GO:0019843">
    <property type="term" value="F:rRNA binding"/>
    <property type="evidence" value="ECO:0007669"/>
    <property type="project" value="UniProtKB-UniRule"/>
</dbReference>
<dbReference type="GO" id="GO:0002935">
    <property type="term" value="F:tRNA (adenine(37)-C2)-methyltransferase activity"/>
    <property type="evidence" value="ECO:0007669"/>
    <property type="project" value="UniProtKB-UniRule"/>
</dbReference>
<dbReference type="GO" id="GO:0000049">
    <property type="term" value="F:tRNA binding"/>
    <property type="evidence" value="ECO:0007669"/>
    <property type="project" value="UniProtKB-UniRule"/>
</dbReference>
<dbReference type="GO" id="GO:0070475">
    <property type="term" value="P:rRNA base methylation"/>
    <property type="evidence" value="ECO:0007669"/>
    <property type="project" value="UniProtKB-UniRule"/>
</dbReference>
<dbReference type="GO" id="GO:0030488">
    <property type="term" value="P:tRNA methylation"/>
    <property type="evidence" value="ECO:0007669"/>
    <property type="project" value="UniProtKB-UniRule"/>
</dbReference>
<dbReference type="CDD" id="cd01335">
    <property type="entry name" value="Radical_SAM"/>
    <property type="match status" value="1"/>
</dbReference>
<dbReference type="FunFam" id="3.20.20.70:FF:000014">
    <property type="entry name" value="Probable dual-specificity RNA methyltransferase RlmN"/>
    <property type="match status" value="1"/>
</dbReference>
<dbReference type="Gene3D" id="1.10.150.530">
    <property type="match status" value="1"/>
</dbReference>
<dbReference type="Gene3D" id="3.20.20.70">
    <property type="entry name" value="Aldolase class I"/>
    <property type="match status" value="1"/>
</dbReference>
<dbReference type="HAMAP" id="MF_01849">
    <property type="entry name" value="RNA_methyltr_RlmN"/>
    <property type="match status" value="1"/>
</dbReference>
<dbReference type="InterPro" id="IPR013785">
    <property type="entry name" value="Aldolase_TIM"/>
</dbReference>
<dbReference type="InterPro" id="IPR040072">
    <property type="entry name" value="Methyltransferase_A"/>
</dbReference>
<dbReference type="InterPro" id="IPR048641">
    <property type="entry name" value="RlmN_N"/>
</dbReference>
<dbReference type="InterPro" id="IPR027492">
    <property type="entry name" value="RNA_MTrfase_RlmN"/>
</dbReference>
<dbReference type="InterPro" id="IPR004383">
    <property type="entry name" value="rRNA_lsu_MTrfase_RlmN/Cfr"/>
</dbReference>
<dbReference type="InterPro" id="IPR007197">
    <property type="entry name" value="rSAM"/>
</dbReference>
<dbReference type="NCBIfam" id="TIGR00048">
    <property type="entry name" value="rRNA_mod_RlmN"/>
    <property type="match status" value="1"/>
</dbReference>
<dbReference type="PANTHER" id="PTHR30544">
    <property type="entry name" value="23S RRNA METHYLTRANSFERASE"/>
    <property type="match status" value="1"/>
</dbReference>
<dbReference type="PANTHER" id="PTHR30544:SF5">
    <property type="entry name" value="RADICAL SAM CORE DOMAIN-CONTAINING PROTEIN"/>
    <property type="match status" value="1"/>
</dbReference>
<dbReference type="Pfam" id="PF04055">
    <property type="entry name" value="Radical_SAM"/>
    <property type="match status" value="1"/>
</dbReference>
<dbReference type="Pfam" id="PF21016">
    <property type="entry name" value="RlmN_N"/>
    <property type="match status" value="1"/>
</dbReference>
<dbReference type="PIRSF" id="PIRSF006004">
    <property type="entry name" value="CHP00048"/>
    <property type="match status" value="1"/>
</dbReference>
<dbReference type="SFLD" id="SFLDF00275">
    <property type="entry name" value="adenosine_C2_methyltransferase"/>
    <property type="match status" value="1"/>
</dbReference>
<dbReference type="SFLD" id="SFLDS00029">
    <property type="entry name" value="Radical_SAM"/>
    <property type="match status" value="1"/>
</dbReference>
<dbReference type="SUPFAM" id="SSF102114">
    <property type="entry name" value="Radical SAM enzymes"/>
    <property type="match status" value="1"/>
</dbReference>
<dbReference type="PROSITE" id="PS51918">
    <property type="entry name" value="RADICAL_SAM"/>
    <property type="match status" value="1"/>
</dbReference>
<gene>
    <name evidence="1" type="primary">rlmN</name>
    <name type="ordered locus">Anae109_2180</name>
</gene>